<reference key="1">
    <citation type="journal article" date="1995" name="Plant Mol. Biol. Rep.">
        <title>Nucleotide sequence of the cyanelle DNA from Cyanophora paradoxa.</title>
        <authorList>
            <person name="Stirewalt V.L."/>
            <person name="Michalowski C.B."/>
            <person name="Loeffelhardt W."/>
            <person name="Bohnert H.J."/>
            <person name="Bryant D.A."/>
        </authorList>
    </citation>
    <scope>NUCLEOTIDE SEQUENCE [LARGE SCALE GENOMIC DNA]</scope>
    <source>
        <strain>UTEX LB 555 / Pringsheim</strain>
    </source>
</reference>
<reference key="2">
    <citation type="book" date="1997" name="Eukaryotism and symbiosis">
        <title>The complete sequence of the cyanelle genome of Cyanophora paradoxa: the genetic complexity of a primitive plastid.</title>
        <editorList>
            <person name="Schenk H.E.A."/>
            <person name="Herrmann R."/>
            <person name="Jeon K.W."/>
            <person name="Mueller N.E."/>
            <person name="Schwemmler W."/>
        </editorList>
        <authorList>
            <person name="Loeffelhardt W."/>
            <person name="Stirewalt V.L."/>
            <person name="Michalowski C.B."/>
            <person name="Annarella M."/>
            <person name="Farley J.Y."/>
            <person name="Schluchter W.M."/>
            <person name="Chung S."/>
            <person name="Newmann-Spallart C."/>
            <person name="Steiner J.M."/>
            <person name="Jakowitsch J."/>
            <person name="Bohnert H.J."/>
            <person name="Bryant D.A."/>
        </authorList>
    </citation>
    <scope>NUCLEOTIDE SEQUENCE [LARGE SCALE GENOMIC DNA]</scope>
    <source>
        <strain>UTEX LB 555 / Pringsheim</strain>
    </source>
</reference>
<geneLocation type="cyanelle"/>
<organism>
    <name type="scientific">Cyanophora paradoxa</name>
    <dbReference type="NCBI Taxonomy" id="2762"/>
    <lineage>
        <taxon>Eukaryota</taxon>
        <taxon>Glaucocystophyceae</taxon>
        <taxon>Cyanophoraceae</taxon>
        <taxon>Cyanophora</taxon>
    </lineage>
</organism>
<sequence length="194" mass="21816">MTILIQQYTNDENKKLELNNISKLLQNRIILFSQTVDDEICNSIVGQLLYLENEDSTKDIRLFINSPGGSVTAGLSVYDTIQNLSVDVSTICFGLAASMGAVLLAAGVENKRFAFASSRIMIHQPLSKVEAPWSHLDIQIRNGAYFKNLLNNILSFHTKQELKQIETDTERDFFLSATEAKQYGIIDHIFINNN</sequence>
<keyword id="KW-0194">Cyanelle</keyword>
<keyword id="KW-0378">Hydrolase</keyword>
<keyword id="KW-0934">Plastid</keyword>
<keyword id="KW-0645">Protease</keyword>
<keyword id="KW-0720">Serine protease</keyword>
<gene>
    <name type="primary">clpP-A</name>
    <name type="synonym">clpP1</name>
</gene>
<accession>Q36863</accession>
<protein>
    <recommendedName>
        <fullName>ATP-dependent Clp protease proteolytic subunit</fullName>
        <ecNumber>3.4.21.92</ecNumber>
    </recommendedName>
    <alternativeName>
        <fullName>Endopeptidase Clp</fullName>
    </alternativeName>
</protein>
<feature type="chain" id="PRO_0000179728" description="ATP-dependent Clp protease proteolytic subunit">
    <location>
        <begin position="1"/>
        <end position="194"/>
    </location>
</feature>
<feature type="active site" description="Nucleophile" evidence="1">
    <location>
        <position position="98"/>
    </location>
</feature>
<feature type="active site" evidence="1">
    <location>
        <position position="123"/>
    </location>
</feature>
<comment type="function">
    <text evidence="1">Cleaves peptides in various proteins in a process that requires ATP hydrolysis. Has a chymotrypsin-like activity. Plays a major role in the degradation of misfolded proteins (By similarity).</text>
</comment>
<comment type="catalytic activity">
    <reaction>
        <text>Hydrolysis of proteins to small peptides in the presence of ATP and magnesium. alpha-casein is the usual test substrate. In the absence of ATP, only oligopeptides shorter than five residues are hydrolyzed (such as succinyl-Leu-Tyr-|-NHMec, and Leu-Tyr-Leu-|-Tyr-Trp, in which cleavage of the -Tyr-|-Leu- and -Tyr-|-Trp bonds also occurs).</text>
        <dbReference type="EC" id="3.4.21.92"/>
    </reaction>
</comment>
<comment type="subunit">
    <text>Component of the chloroplastic Clp protease core complex.</text>
</comment>
<comment type="subcellular location">
    <subcellularLocation>
        <location>Plastid</location>
        <location>Cyanelle</location>
    </subcellularLocation>
</comment>
<comment type="similarity">
    <text evidence="2">Belongs to the peptidase S14 family.</text>
</comment>
<proteinExistence type="inferred from homology"/>
<evidence type="ECO:0000250" key="1"/>
<evidence type="ECO:0000305" key="2"/>
<dbReference type="EC" id="3.4.21.92"/>
<dbReference type="EMBL" id="U30821">
    <property type="protein sequence ID" value="AAA81174.1"/>
    <property type="molecule type" value="Genomic_DNA"/>
</dbReference>
<dbReference type="EMBL" id="U30821">
    <property type="protein sequence ID" value="AAA81292.1"/>
    <property type="molecule type" value="Genomic_DNA"/>
</dbReference>
<dbReference type="PIR" id="T06831">
    <property type="entry name" value="T06831"/>
</dbReference>
<dbReference type="SMR" id="Q36863"/>
<dbReference type="BRENDA" id="3.4.21.92">
    <property type="organism ID" value="1772"/>
</dbReference>
<dbReference type="GO" id="GO:0009842">
    <property type="term" value="C:cyanelle"/>
    <property type="evidence" value="ECO:0007669"/>
    <property type="project" value="UniProtKB-SubCell"/>
</dbReference>
<dbReference type="GO" id="GO:0009368">
    <property type="term" value="C:endopeptidase Clp complex"/>
    <property type="evidence" value="ECO:0007669"/>
    <property type="project" value="TreeGrafter"/>
</dbReference>
<dbReference type="GO" id="GO:0004176">
    <property type="term" value="F:ATP-dependent peptidase activity"/>
    <property type="evidence" value="ECO:0007669"/>
    <property type="project" value="InterPro"/>
</dbReference>
<dbReference type="GO" id="GO:0051117">
    <property type="term" value="F:ATPase binding"/>
    <property type="evidence" value="ECO:0007669"/>
    <property type="project" value="TreeGrafter"/>
</dbReference>
<dbReference type="GO" id="GO:0004252">
    <property type="term" value="F:serine-type endopeptidase activity"/>
    <property type="evidence" value="ECO:0007669"/>
    <property type="project" value="UniProtKB-UniRule"/>
</dbReference>
<dbReference type="GO" id="GO:0006515">
    <property type="term" value="P:protein quality control for misfolded or incompletely synthesized proteins"/>
    <property type="evidence" value="ECO:0007669"/>
    <property type="project" value="TreeGrafter"/>
</dbReference>
<dbReference type="CDD" id="cd07017">
    <property type="entry name" value="S14_ClpP_2"/>
    <property type="match status" value="1"/>
</dbReference>
<dbReference type="Gene3D" id="3.90.226.10">
    <property type="entry name" value="2-enoyl-CoA Hydratase, Chain A, domain 1"/>
    <property type="match status" value="1"/>
</dbReference>
<dbReference type="HAMAP" id="MF_00444">
    <property type="entry name" value="ClpP"/>
    <property type="match status" value="1"/>
</dbReference>
<dbReference type="InterPro" id="IPR001907">
    <property type="entry name" value="ClpP"/>
</dbReference>
<dbReference type="InterPro" id="IPR029045">
    <property type="entry name" value="ClpP/crotonase-like_dom_sf"/>
</dbReference>
<dbReference type="InterPro" id="IPR023562">
    <property type="entry name" value="ClpP/TepA"/>
</dbReference>
<dbReference type="InterPro" id="IPR033135">
    <property type="entry name" value="ClpP_His_AS"/>
</dbReference>
<dbReference type="InterPro" id="IPR018215">
    <property type="entry name" value="ClpP_Ser_AS"/>
</dbReference>
<dbReference type="PANTHER" id="PTHR10381">
    <property type="entry name" value="ATP-DEPENDENT CLP PROTEASE PROTEOLYTIC SUBUNIT"/>
    <property type="match status" value="1"/>
</dbReference>
<dbReference type="PANTHER" id="PTHR10381:SF11">
    <property type="entry name" value="ATP-DEPENDENT CLP PROTEASE PROTEOLYTIC SUBUNIT, MITOCHONDRIAL"/>
    <property type="match status" value="1"/>
</dbReference>
<dbReference type="Pfam" id="PF00574">
    <property type="entry name" value="CLP_protease"/>
    <property type="match status" value="1"/>
</dbReference>
<dbReference type="PRINTS" id="PR00127">
    <property type="entry name" value="CLPPROTEASEP"/>
</dbReference>
<dbReference type="SUPFAM" id="SSF52096">
    <property type="entry name" value="ClpP/crotonase"/>
    <property type="match status" value="1"/>
</dbReference>
<dbReference type="PROSITE" id="PS00382">
    <property type="entry name" value="CLP_PROTEASE_HIS"/>
    <property type="match status" value="1"/>
</dbReference>
<dbReference type="PROSITE" id="PS00381">
    <property type="entry name" value="CLP_PROTEASE_SER"/>
    <property type="match status" value="1"/>
</dbReference>
<name>CLPP1_CYAPA</name>